<reference key="1">
    <citation type="submission" date="2005-03" db="EMBL/GenBank/DDBJ databases">
        <title>Brevibacillus brevis strain 47, complete genome.</title>
        <authorList>
            <person name="Hosoyama A."/>
            <person name="Yamada R."/>
            <person name="Hongo Y."/>
            <person name="Terui Y."/>
            <person name="Ankai A."/>
            <person name="Masuyama W."/>
            <person name="Sekiguchi M."/>
            <person name="Takeda T."/>
            <person name="Asano K."/>
            <person name="Ohji S."/>
            <person name="Ichikawa N."/>
            <person name="Narita S."/>
            <person name="Aoki N."/>
            <person name="Miura H."/>
            <person name="Matsushita S."/>
            <person name="Sekigawa T."/>
            <person name="Yamagata H."/>
            <person name="Yoshikawa H."/>
            <person name="Udaka S."/>
            <person name="Tanikawa S."/>
            <person name="Fujita N."/>
        </authorList>
    </citation>
    <scope>NUCLEOTIDE SEQUENCE [LARGE SCALE GENOMIC DNA]</scope>
    <source>
        <strain>47 / JCM 6285 / NBRC 100599</strain>
    </source>
</reference>
<dbReference type="EC" id="2.1.1.45" evidence="1"/>
<dbReference type="EMBL" id="AP008955">
    <property type="protein sequence ID" value="BAH45365.1"/>
    <property type="molecule type" value="Genomic_DNA"/>
</dbReference>
<dbReference type="RefSeq" id="WP_015892628.1">
    <property type="nucleotide sequence ID" value="NC_012491.1"/>
</dbReference>
<dbReference type="SMR" id="C0ZI91"/>
<dbReference type="STRING" id="358681.BBR47_43880"/>
<dbReference type="KEGG" id="bbe:BBR47_43880"/>
<dbReference type="eggNOG" id="COG0207">
    <property type="taxonomic scope" value="Bacteria"/>
</dbReference>
<dbReference type="HOGENOM" id="CLU_021669_0_0_9"/>
<dbReference type="UniPathway" id="UPA00575"/>
<dbReference type="Proteomes" id="UP000001877">
    <property type="component" value="Chromosome"/>
</dbReference>
<dbReference type="GO" id="GO:0005829">
    <property type="term" value="C:cytosol"/>
    <property type="evidence" value="ECO:0007669"/>
    <property type="project" value="TreeGrafter"/>
</dbReference>
<dbReference type="GO" id="GO:0004799">
    <property type="term" value="F:thymidylate synthase activity"/>
    <property type="evidence" value="ECO:0007669"/>
    <property type="project" value="UniProtKB-UniRule"/>
</dbReference>
<dbReference type="GO" id="GO:0006231">
    <property type="term" value="P:dTMP biosynthetic process"/>
    <property type="evidence" value="ECO:0007669"/>
    <property type="project" value="UniProtKB-UniRule"/>
</dbReference>
<dbReference type="GO" id="GO:0006235">
    <property type="term" value="P:dTTP biosynthetic process"/>
    <property type="evidence" value="ECO:0007669"/>
    <property type="project" value="UniProtKB-UniRule"/>
</dbReference>
<dbReference type="GO" id="GO:0032259">
    <property type="term" value="P:methylation"/>
    <property type="evidence" value="ECO:0007669"/>
    <property type="project" value="UniProtKB-KW"/>
</dbReference>
<dbReference type="CDD" id="cd00351">
    <property type="entry name" value="TS_Pyrimidine_HMase"/>
    <property type="match status" value="1"/>
</dbReference>
<dbReference type="FunFam" id="3.30.572.10:FF:000001">
    <property type="entry name" value="Thymidylate synthase"/>
    <property type="match status" value="1"/>
</dbReference>
<dbReference type="Gene3D" id="3.30.572.10">
    <property type="entry name" value="Thymidylate synthase/dCMP hydroxymethylase domain"/>
    <property type="match status" value="1"/>
</dbReference>
<dbReference type="HAMAP" id="MF_00008">
    <property type="entry name" value="Thymidy_synth_bact"/>
    <property type="match status" value="1"/>
</dbReference>
<dbReference type="InterPro" id="IPR045097">
    <property type="entry name" value="Thymidate_synth/dCMP_Mease"/>
</dbReference>
<dbReference type="InterPro" id="IPR023451">
    <property type="entry name" value="Thymidate_synth/dCMP_Mease_dom"/>
</dbReference>
<dbReference type="InterPro" id="IPR036926">
    <property type="entry name" value="Thymidate_synth/dCMP_Mease_sf"/>
</dbReference>
<dbReference type="InterPro" id="IPR000398">
    <property type="entry name" value="Thymidylate_synthase"/>
</dbReference>
<dbReference type="InterPro" id="IPR020940">
    <property type="entry name" value="Thymidylate_synthase_AS"/>
</dbReference>
<dbReference type="NCBIfam" id="NF002497">
    <property type="entry name" value="PRK01827.1-3"/>
    <property type="match status" value="1"/>
</dbReference>
<dbReference type="NCBIfam" id="NF002499">
    <property type="entry name" value="PRK01827.1-5"/>
    <property type="match status" value="1"/>
</dbReference>
<dbReference type="NCBIfam" id="TIGR03284">
    <property type="entry name" value="thym_sym"/>
    <property type="match status" value="2"/>
</dbReference>
<dbReference type="PANTHER" id="PTHR11548:SF9">
    <property type="entry name" value="THYMIDYLATE SYNTHASE"/>
    <property type="match status" value="1"/>
</dbReference>
<dbReference type="PANTHER" id="PTHR11548">
    <property type="entry name" value="THYMIDYLATE SYNTHASE 1"/>
    <property type="match status" value="1"/>
</dbReference>
<dbReference type="Pfam" id="PF00303">
    <property type="entry name" value="Thymidylat_synt"/>
    <property type="match status" value="1"/>
</dbReference>
<dbReference type="PRINTS" id="PR00108">
    <property type="entry name" value="THYMDSNTHASE"/>
</dbReference>
<dbReference type="SUPFAM" id="SSF55831">
    <property type="entry name" value="Thymidylate synthase/dCMP hydroxymethylase"/>
    <property type="match status" value="1"/>
</dbReference>
<dbReference type="PROSITE" id="PS00091">
    <property type="entry name" value="THYMIDYLATE_SYNTHASE"/>
    <property type="match status" value="1"/>
</dbReference>
<proteinExistence type="inferred from homology"/>
<feature type="chain" id="PRO_1000197234" description="Thymidylate synthase">
    <location>
        <begin position="1"/>
        <end position="264"/>
    </location>
</feature>
<feature type="active site" description="Nucleophile" evidence="1">
    <location>
        <position position="146"/>
    </location>
</feature>
<feature type="binding site" description="in other chain" evidence="1">
    <location>
        <position position="21"/>
    </location>
    <ligand>
        <name>dUMP</name>
        <dbReference type="ChEBI" id="CHEBI:246422"/>
        <note>ligand shared between dimeric partners</note>
    </ligand>
</feature>
<feature type="binding site" evidence="1">
    <location>
        <position position="51"/>
    </location>
    <ligand>
        <name>(6R)-5,10-methylene-5,6,7,8-tetrahydrofolate</name>
        <dbReference type="ChEBI" id="CHEBI:15636"/>
    </ligand>
</feature>
<feature type="binding site" evidence="1">
    <location>
        <begin position="126"/>
        <end position="127"/>
    </location>
    <ligand>
        <name>dUMP</name>
        <dbReference type="ChEBI" id="CHEBI:246422"/>
        <note>ligand shared between dimeric partners</note>
    </ligand>
</feature>
<feature type="binding site" description="in other chain" evidence="1">
    <location>
        <begin position="166"/>
        <end position="169"/>
    </location>
    <ligand>
        <name>dUMP</name>
        <dbReference type="ChEBI" id="CHEBI:246422"/>
        <note>ligand shared between dimeric partners</note>
    </ligand>
</feature>
<feature type="binding site" evidence="1">
    <location>
        <position position="169"/>
    </location>
    <ligand>
        <name>(6R)-5,10-methylene-5,6,7,8-tetrahydrofolate</name>
        <dbReference type="ChEBI" id="CHEBI:15636"/>
    </ligand>
</feature>
<feature type="binding site" description="in other chain" evidence="1">
    <location>
        <position position="177"/>
    </location>
    <ligand>
        <name>dUMP</name>
        <dbReference type="ChEBI" id="CHEBI:246422"/>
        <note>ligand shared between dimeric partners</note>
    </ligand>
</feature>
<feature type="binding site" description="in other chain" evidence="1">
    <location>
        <begin position="207"/>
        <end position="209"/>
    </location>
    <ligand>
        <name>dUMP</name>
        <dbReference type="ChEBI" id="CHEBI:246422"/>
        <note>ligand shared between dimeric partners</note>
    </ligand>
</feature>
<feature type="binding site" evidence="1">
    <location>
        <position position="263"/>
    </location>
    <ligand>
        <name>(6R)-5,10-methylene-5,6,7,8-tetrahydrofolate</name>
        <dbReference type="ChEBI" id="CHEBI:15636"/>
    </ligand>
</feature>
<sequence>MKQYLDLCQRILDEGVIKEDRTGTGTTSVFGHQMRFDLSEGFPMVTTKKLHMKSIIHELLWFLSGDTNVRYLQENGVRIWNEWADENGDLGPVYGSQWRSFTGRDGKTVDQIQWVIDEIKRNPDSRRLIVSAWNPAELDKMALPPCHLLFQFYVANGKLSCQLYQRSGDTFLGVPFNIASYALLTHMVAHVTGLEVGDFVHTIGDAHLYLNHIEQVKLQLTREPKPLPKLVLNPDVTSIFDFKYEDIEIVGYESHPHIKGEVAV</sequence>
<gene>
    <name evidence="1" type="primary">thyA</name>
    <name type="ordered locus">BBR47_43880</name>
</gene>
<name>TYSY_BREBN</name>
<evidence type="ECO:0000255" key="1">
    <source>
        <dbReference type="HAMAP-Rule" id="MF_00008"/>
    </source>
</evidence>
<protein>
    <recommendedName>
        <fullName evidence="1">Thymidylate synthase</fullName>
        <shortName evidence="1">TS</shortName>
        <shortName evidence="1">TSase</shortName>
        <ecNumber evidence="1">2.1.1.45</ecNumber>
    </recommendedName>
</protein>
<accession>C0ZI91</accession>
<organism>
    <name type="scientific">Brevibacillus brevis (strain 47 / JCM 6285 / NBRC 100599)</name>
    <dbReference type="NCBI Taxonomy" id="358681"/>
    <lineage>
        <taxon>Bacteria</taxon>
        <taxon>Bacillati</taxon>
        <taxon>Bacillota</taxon>
        <taxon>Bacilli</taxon>
        <taxon>Bacillales</taxon>
        <taxon>Paenibacillaceae</taxon>
        <taxon>Brevibacillus</taxon>
    </lineage>
</organism>
<keyword id="KW-0963">Cytoplasm</keyword>
<keyword id="KW-0489">Methyltransferase</keyword>
<keyword id="KW-0545">Nucleotide biosynthesis</keyword>
<keyword id="KW-1185">Reference proteome</keyword>
<keyword id="KW-0808">Transferase</keyword>
<comment type="function">
    <text evidence="1">Catalyzes the reductive methylation of 2'-deoxyuridine-5'-monophosphate (dUMP) to 2'-deoxythymidine-5'-monophosphate (dTMP) while utilizing 5,10-methylenetetrahydrofolate (mTHF) as the methyl donor and reductant in the reaction, yielding dihydrofolate (DHF) as a by-product. This enzymatic reaction provides an intracellular de novo source of dTMP, an essential precursor for DNA biosynthesis.</text>
</comment>
<comment type="catalytic activity">
    <reaction evidence="1">
        <text>dUMP + (6R)-5,10-methylene-5,6,7,8-tetrahydrofolate = 7,8-dihydrofolate + dTMP</text>
        <dbReference type="Rhea" id="RHEA:12104"/>
        <dbReference type="ChEBI" id="CHEBI:15636"/>
        <dbReference type="ChEBI" id="CHEBI:57451"/>
        <dbReference type="ChEBI" id="CHEBI:63528"/>
        <dbReference type="ChEBI" id="CHEBI:246422"/>
        <dbReference type="EC" id="2.1.1.45"/>
    </reaction>
</comment>
<comment type="pathway">
    <text evidence="1">Pyrimidine metabolism; dTTP biosynthesis.</text>
</comment>
<comment type="subunit">
    <text evidence="1">Homodimer.</text>
</comment>
<comment type="subcellular location">
    <subcellularLocation>
        <location evidence="1">Cytoplasm</location>
    </subcellularLocation>
</comment>
<comment type="similarity">
    <text evidence="1">Belongs to the thymidylate synthase family. Bacterial-type ThyA subfamily.</text>
</comment>